<sequence length="428" mass="48337">MIIFKNLILKISSLRFAISLIIFIAITSGIGTFIPQGNSNKFYIDNFDSAPIFGFLDGEKVLKLQLDHIYTSIWFLFTLILLCISLSACSFRRQIPSLKASLKWIEYNNEKKFSKLQLTSSHPINQDGDHISKVDLLLKKRGWKTYKFKSHISARRGLIGKIGPLVVHIGLIVLLLGSAYGSFTSQSNEQYLLPGESLDLVNESTNSKANIKLVNFSIERESDGIPKQFISKLNFSSEDLNINEIKTAKVNHPIRFKGLTIYQADWAISNVVLEIDNILYQLQLKEIPEIGNQVWGVLVELGSETKKNFLLTIDNENGPLKISNVENFSGNNLYINDRPLEVNSSKVSLKKIIPSSGLIIKNDPSIPFIYFSFILIIFGTIISLIPTNQLWIFVNKESHKLSIGGLSNKNLVGFKKEFFKLSEEIKNF</sequence>
<proteinExistence type="inferred from homology"/>
<evidence type="ECO:0000255" key="1">
    <source>
        <dbReference type="HAMAP-Rule" id="MF_01392"/>
    </source>
</evidence>
<name>CCS1_PROM9</name>
<feature type="chain" id="PRO_5000102639" description="Cytochrome c biogenesis protein CcsB">
    <location>
        <begin position="1"/>
        <end position="428"/>
    </location>
</feature>
<feature type="transmembrane region" description="Helical" evidence="1">
    <location>
        <begin position="14"/>
        <end position="34"/>
    </location>
</feature>
<feature type="transmembrane region" description="Helical" evidence="1">
    <location>
        <begin position="72"/>
        <end position="92"/>
    </location>
</feature>
<feature type="transmembrane region" description="Helical" evidence="1">
    <location>
        <begin position="162"/>
        <end position="182"/>
    </location>
</feature>
<accession>Q318T2</accession>
<reference key="1">
    <citation type="journal article" date="2006" name="Science">
        <title>Genomic islands and the ecology and evolution of Prochlorococcus.</title>
        <authorList>
            <person name="Coleman M.L."/>
            <person name="Sullivan M.B."/>
            <person name="Martiny A.C."/>
            <person name="Steglich C."/>
            <person name="Barry K."/>
            <person name="Delong E.F."/>
            <person name="Chisholm S.W."/>
        </authorList>
    </citation>
    <scope>NUCLEOTIDE SEQUENCE [LARGE SCALE GENOMIC DNA]</scope>
    <source>
        <strain>MIT 9312</strain>
    </source>
</reference>
<comment type="function">
    <text evidence="1">Required during biogenesis of c-type cytochromes (cytochrome c6 and cytochrome f) at the step of heme attachment.</text>
</comment>
<comment type="subunit">
    <text evidence="1">May interact with CcsA.</text>
</comment>
<comment type="subcellular location">
    <subcellularLocation>
        <location evidence="1">Cellular thylakoid membrane</location>
        <topology evidence="1">Multi-pass membrane protein</topology>
    </subcellularLocation>
</comment>
<comment type="similarity">
    <text evidence="1">Belongs to the Ccs1/CcsB family.</text>
</comment>
<keyword id="KW-0201">Cytochrome c-type biogenesis</keyword>
<keyword id="KW-0472">Membrane</keyword>
<keyword id="KW-0793">Thylakoid</keyword>
<keyword id="KW-0812">Transmembrane</keyword>
<keyword id="KW-1133">Transmembrane helix</keyword>
<gene>
    <name evidence="1" type="primary">ccsB</name>
    <name evidence="1" type="synonym">ccs1</name>
    <name type="ordered locus">PMT9312_1553</name>
</gene>
<dbReference type="EMBL" id="CP000111">
    <property type="protein sequence ID" value="ABB50613.1"/>
    <property type="molecule type" value="Genomic_DNA"/>
</dbReference>
<dbReference type="RefSeq" id="WP_011377095.1">
    <property type="nucleotide sequence ID" value="NC_007577.1"/>
</dbReference>
<dbReference type="STRING" id="74546.PMT9312_1553"/>
<dbReference type="KEGG" id="pmi:PMT9312_1553"/>
<dbReference type="eggNOG" id="COG1333">
    <property type="taxonomic scope" value="Bacteria"/>
</dbReference>
<dbReference type="HOGENOM" id="CLU_034630_0_0_3"/>
<dbReference type="OrthoDB" id="9770923at2"/>
<dbReference type="Proteomes" id="UP000002715">
    <property type="component" value="Chromosome"/>
</dbReference>
<dbReference type="GO" id="GO:0031676">
    <property type="term" value="C:plasma membrane-derived thylakoid membrane"/>
    <property type="evidence" value="ECO:0007669"/>
    <property type="project" value="UniProtKB-SubCell"/>
</dbReference>
<dbReference type="GO" id="GO:0017004">
    <property type="term" value="P:cytochrome complex assembly"/>
    <property type="evidence" value="ECO:0007669"/>
    <property type="project" value="UniProtKB-UniRule"/>
</dbReference>
<dbReference type="HAMAP" id="MF_01392">
    <property type="entry name" value="CytC_Ccs1"/>
    <property type="match status" value="1"/>
</dbReference>
<dbReference type="InterPro" id="IPR023494">
    <property type="entry name" value="Cyt_c_bgen_Ccs1/CcsB/ResB"/>
</dbReference>
<dbReference type="InterPro" id="IPR007816">
    <property type="entry name" value="ResB-like_domain"/>
</dbReference>
<dbReference type="PANTHER" id="PTHR31566">
    <property type="entry name" value="CYTOCHROME C BIOGENESIS PROTEIN CCS1, CHLOROPLASTIC"/>
    <property type="match status" value="1"/>
</dbReference>
<dbReference type="PANTHER" id="PTHR31566:SF0">
    <property type="entry name" value="CYTOCHROME C BIOGENESIS PROTEIN CCS1, CHLOROPLASTIC"/>
    <property type="match status" value="1"/>
</dbReference>
<dbReference type="Pfam" id="PF05140">
    <property type="entry name" value="ResB"/>
    <property type="match status" value="2"/>
</dbReference>
<organism>
    <name type="scientific">Prochlorococcus marinus (strain MIT 9312)</name>
    <dbReference type="NCBI Taxonomy" id="74546"/>
    <lineage>
        <taxon>Bacteria</taxon>
        <taxon>Bacillati</taxon>
        <taxon>Cyanobacteriota</taxon>
        <taxon>Cyanophyceae</taxon>
        <taxon>Synechococcales</taxon>
        <taxon>Prochlorococcaceae</taxon>
        <taxon>Prochlorococcus</taxon>
    </lineage>
</organism>
<protein>
    <recommendedName>
        <fullName evidence="1">Cytochrome c biogenesis protein CcsB</fullName>
    </recommendedName>
</protein>